<accession>A8GPW1</accession>
<reference key="1">
    <citation type="submission" date="2007-09" db="EMBL/GenBank/DDBJ databases">
        <title>Complete genome sequence of Rickettsia akari.</title>
        <authorList>
            <person name="Madan A."/>
            <person name="Fahey J."/>
            <person name="Helton E."/>
            <person name="Ketteman M."/>
            <person name="Madan A."/>
            <person name="Rodrigues S."/>
            <person name="Sanchez A."/>
            <person name="Whiting M."/>
            <person name="Dasch G."/>
            <person name="Eremeeva M."/>
        </authorList>
    </citation>
    <scope>NUCLEOTIDE SEQUENCE [LARGE SCALE GENOMIC DNA]</scope>
    <source>
        <strain>Hartford</strain>
    </source>
</reference>
<sequence>MTCKIIGCGGYLPSKIVSNDELAKFVETNDEWIRTRSGISQRHIADDNEYTSHLALKSAEQAIADARVSANDVDLIITCTTTSDNSFPSVATKLHGYLGLTNIPSFDLQAVCAGFVYGLQVADSLIASGKYKTILLIGAEKMTSLLDWNDRSTCVLFGDGAGSVILQRSSDDSGLIDSNIFSSGADYEILYTSGGISMNGTSGKIIMQGQKLFRHAIEKMQQSIEDLLHTNQFSVSGIDYFIPHQANIRIINKLAELLNIEEHKVVKTVEKHANCSAASIPLALSTLKASGKIKKGDILLFSAIGAGLTWGSALIRW</sequence>
<name>FABH_RICAH</name>
<comment type="function">
    <text evidence="1">Catalyzes the condensation reaction of fatty acid synthesis by the addition to an acyl acceptor of two carbons from malonyl-ACP. Catalyzes the first condensation reaction which initiates fatty acid synthesis and may therefore play a role in governing the total rate of fatty acid production. Possesses both acetoacetyl-ACP synthase and acetyl transacylase activities. Its substrate specificity determines the biosynthesis of branched-chain and/or straight-chain of fatty acids.</text>
</comment>
<comment type="catalytic activity">
    <reaction evidence="1">
        <text>malonyl-[ACP] + acetyl-CoA + H(+) = 3-oxobutanoyl-[ACP] + CO2 + CoA</text>
        <dbReference type="Rhea" id="RHEA:12080"/>
        <dbReference type="Rhea" id="RHEA-COMP:9623"/>
        <dbReference type="Rhea" id="RHEA-COMP:9625"/>
        <dbReference type="ChEBI" id="CHEBI:15378"/>
        <dbReference type="ChEBI" id="CHEBI:16526"/>
        <dbReference type="ChEBI" id="CHEBI:57287"/>
        <dbReference type="ChEBI" id="CHEBI:57288"/>
        <dbReference type="ChEBI" id="CHEBI:78449"/>
        <dbReference type="ChEBI" id="CHEBI:78450"/>
        <dbReference type="EC" id="2.3.1.180"/>
    </reaction>
</comment>
<comment type="pathway">
    <text evidence="1">Lipid metabolism; fatty acid biosynthesis.</text>
</comment>
<comment type="subunit">
    <text evidence="1">Homodimer.</text>
</comment>
<comment type="subcellular location">
    <subcellularLocation>
        <location evidence="1">Cytoplasm</location>
    </subcellularLocation>
</comment>
<comment type="domain">
    <text evidence="1">The last Arg residue of the ACP-binding site is essential for the weak association between ACP/AcpP and FabH.</text>
</comment>
<comment type="similarity">
    <text evidence="1">Belongs to the thiolase-like superfamily. FabH family.</text>
</comment>
<dbReference type="EC" id="2.3.1.180" evidence="1"/>
<dbReference type="EMBL" id="CP000847">
    <property type="protein sequence ID" value="ABV75436.1"/>
    <property type="molecule type" value="Genomic_DNA"/>
</dbReference>
<dbReference type="RefSeq" id="WP_012150065.1">
    <property type="nucleotide sequence ID" value="NC_009881.1"/>
</dbReference>
<dbReference type="SMR" id="A8GPW1"/>
<dbReference type="STRING" id="293614.A1C_06015"/>
<dbReference type="KEGG" id="rak:A1C_06015"/>
<dbReference type="eggNOG" id="COG0332">
    <property type="taxonomic scope" value="Bacteria"/>
</dbReference>
<dbReference type="HOGENOM" id="CLU_039592_3_1_5"/>
<dbReference type="UniPathway" id="UPA00094"/>
<dbReference type="Proteomes" id="UP000006830">
    <property type="component" value="Chromosome"/>
</dbReference>
<dbReference type="GO" id="GO:0005737">
    <property type="term" value="C:cytoplasm"/>
    <property type="evidence" value="ECO:0007669"/>
    <property type="project" value="UniProtKB-SubCell"/>
</dbReference>
<dbReference type="GO" id="GO:0004315">
    <property type="term" value="F:3-oxoacyl-[acyl-carrier-protein] synthase activity"/>
    <property type="evidence" value="ECO:0007669"/>
    <property type="project" value="InterPro"/>
</dbReference>
<dbReference type="GO" id="GO:0033818">
    <property type="term" value="F:beta-ketoacyl-acyl-carrier-protein synthase III activity"/>
    <property type="evidence" value="ECO:0007669"/>
    <property type="project" value="UniProtKB-UniRule"/>
</dbReference>
<dbReference type="GO" id="GO:0006633">
    <property type="term" value="P:fatty acid biosynthetic process"/>
    <property type="evidence" value="ECO:0007669"/>
    <property type="project" value="UniProtKB-UniRule"/>
</dbReference>
<dbReference type="CDD" id="cd00830">
    <property type="entry name" value="KAS_III"/>
    <property type="match status" value="1"/>
</dbReference>
<dbReference type="FunFam" id="3.40.47.10:FF:000004">
    <property type="entry name" value="3-oxoacyl-[acyl-carrier-protein] synthase 3"/>
    <property type="match status" value="1"/>
</dbReference>
<dbReference type="Gene3D" id="3.40.47.10">
    <property type="match status" value="1"/>
</dbReference>
<dbReference type="HAMAP" id="MF_01815">
    <property type="entry name" value="FabH"/>
    <property type="match status" value="1"/>
</dbReference>
<dbReference type="InterPro" id="IPR013747">
    <property type="entry name" value="ACP_syn_III_C"/>
</dbReference>
<dbReference type="InterPro" id="IPR013751">
    <property type="entry name" value="ACP_syn_III_N"/>
</dbReference>
<dbReference type="InterPro" id="IPR004655">
    <property type="entry name" value="FabH"/>
</dbReference>
<dbReference type="InterPro" id="IPR016039">
    <property type="entry name" value="Thiolase-like"/>
</dbReference>
<dbReference type="NCBIfam" id="TIGR00747">
    <property type="entry name" value="fabH"/>
    <property type="match status" value="1"/>
</dbReference>
<dbReference type="NCBIfam" id="NF006829">
    <property type="entry name" value="PRK09352.1"/>
    <property type="match status" value="1"/>
</dbReference>
<dbReference type="PANTHER" id="PTHR43091">
    <property type="entry name" value="3-OXOACYL-[ACYL-CARRIER-PROTEIN] SYNTHASE"/>
    <property type="match status" value="1"/>
</dbReference>
<dbReference type="PANTHER" id="PTHR43091:SF1">
    <property type="entry name" value="BETA-KETOACYL-[ACYL-CARRIER-PROTEIN] SYNTHASE III, CHLOROPLASTIC"/>
    <property type="match status" value="1"/>
</dbReference>
<dbReference type="Pfam" id="PF08545">
    <property type="entry name" value="ACP_syn_III"/>
    <property type="match status" value="1"/>
</dbReference>
<dbReference type="Pfam" id="PF08541">
    <property type="entry name" value="ACP_syn_III_C"/>
    <property type="match status" value="1"/>
</dbReference>
<dbReference type="SUPFAM" id="SSF53901">
    <property type="entry name" value="Thiolase-like"/>
    <property type="match status" value="1"/>
</dbReference>
<protein>
    <recommendedName>
        <fullName evidence="1">Beta-ketoacyl-[acyl-carrier-protein] synthase III</fullName>
        <shortName evidence="1">Beta-ketoacyl-ACP synthase III</shortName>
        <shortName evidence="1">KAS III</shortName>
        <ecNumber evidence="1">2.3.1.180</ecNumber>
    </recommendedName>
    <alternativeName>
        <fullName evidence="1">3-oxoacyl-[acyl-carrier-protein] synthase 3</fullName>
    </alternativeName>
    <alternativeName>
        <fullName evidence="1">3-oxoacyl-[acyl-carrier-protein] synthase III</fullName>
    </alternativeName>
</protein>
<feature type="chain" id="PRO_1000056398" description="Beta-ketoacyl-[acyl-carrier-protein] synthase III">
    <location>
        <begin position="1"/>
        <end position="317"/>
    </location>
</feature>
<feature type="region of interest" description="ACP-binding" evidence="1">
    <location>
        <begin position="245"/>
        <end position="249"/>
    </location>
</feature>
<feature type="active site" evidence="1">
    <location>
        <position position="112"/>
    </location>
</feature>
<feature type="active site" evidence="1">
    <location>
        <position position="244"/>
    </location>
</feature>
<feature type="active site" evidence="1">
    <location>
        <position position="274"/>
    </location>
</feature>
<keyword id="KW-0012">Acyltransferase</keyword>
<keyword id="KW-0963">Cytoplasm</keyword>
<keyword id="KW-0275">Fatty acid biosynthesis</keyword>
<keyword id="KW-0276">Fatty acid metabolism</keyword>
<keyword id="KW-0444">Lipid biosynthesis</keyword>
<keyword id="KW-0443">Lipid metabolism</keyword>
<keyword id="KW-0511">Multifunctional enzyme</keyword>
<keyword id="KW-0808">Transferase</keyword>
<proteinExistence type="inferred from homology"/>
<gene>
    <name evidence="1" type="primary">fabH</name>
    <name type="ordered locus">A1C_06015</name>
</gene>
<evidence type="ECO:0000255" key="1">
    <source>
        <dbReference type="HAMAP-Rule" id="MF_01815"/>
    </source>
</evidence>
<organism>
    <name type="scientific">Rickettsia akari (strain Hartford)</name>
    <dbReference type="NCBI Taxonomy" id="293614"/>
    <lineage>
        <taxon>Bacteria</taxon>
        <taxon>Pseudomonadati</taxon>
        <taxon>Pseudomonadota</taxon>
        <taxon>Alphaproteobacteria</taxon>
        <taxon>Rickettsiales</taxon>
        <taxon>Rickettsiaceae</taxon>
        <taxon>Rickettsieae</taxon>
        <taxon>Rickettsia</taxon>
        <taxon>spotted fever group</taxon>
    </lineage>
</organism>